<organism evidence="16">
    <name type="scientific">Drosophila melanogaster</name>
    <name type="common">Fruit fly</name>
    <dbReference type="NCBI Taxonomy" id="7227"/>
    <lineage>
        <taxon>Eukaryota</taxon>
        <taxon>Metazoa</taxon>
        <taxon>Ecdysozoa</taxon>
        <taxon>Arthropoda</taxon>
        <taxon>Hexapoda</taxon>
        <taxon>Insecta</taxon>
        <taxon>Pterygota</taxon>
        <taxon>Neoptera</taxon>
        <taxon>Endopterygota</taxon>
        <taxon>Diptera</taxon>
        <taxon>Brachycera</taxon>
        <taxon>Muscomorpha</taxon>
        <taxon>Ephydroidea</taxon>
        <taxon>Drosophilidae</taxon>
        <taxon>Drosophila</taxon>
        <taxon>Sophophora</taxon>
    </lineage>
</organism>
<dbReference type="EC" id="6.1.1.14" evidence="1"/>
<dbReference type="EC" id="2.7.7.-" evidence="1"/>
<dbReference type="EMBL" id="AE014296">
    <property type="protein sequence ID" value="AAF49668.2"/>
    <property type="molecule type" value="Genomic_DNA"/>
</dbReference>
<dbReference type="EMBL" id="AE014296">
    <property type="protein sequence ID" value="AAN11786.1"/>
    <property type="molecule type" value="Genomic_DNA"/>
</dbReference>
<dbReference type="EMBL" id="AE014296">
    <property type="protein sequence ID" value="AGB94560.1"/>
    <property type="molecule type" value="Genomic_DNA"/>
</dbReference>
<dbReference type="EMBL" id="AY051413">
    <property type="protein sequence ID" value="AAK92837.1"/>
    <property type="molecule type" value="mRNA"/>
</dbReference>
<dbReference type="EMBL" id="BT133207">
    <property type="protein sequence ID" value="AFA28448.1"/>
    <property type="molecule type" value="mRNA"/>
</dbReference>
<dbReference type="EMBL" id="BT099907">
    <property type="protein sequence ID" value="ACX32978.1"/>
    <property type="molecule type" value="mRNA"/>
</dbReference>
<dbReference type="RefSeq" id="NP_001261867.1">
    <molecule id="Q9VUK8-1"/>
    <property type="nucleotide sequence ID" value="NM_001274938.1"/>
</dbReference>
<dbReference type="RefSeq" id="NP_648746.1">
    <molecule id="Q9VUK8-2"/>
    <property type="nucleotide sequence ID" value="NM_140489.3"/>
</dbReference>
<dbReference type="RefSeq" id="NP_730022.1">
    <molecule id="Q9VUK8-1"/>
    <property type="nucleotide sequence ID" value="NM_168605.2"/>
</dbReference>
<dbReference type="SMR" id="Q9VUK8"/>
<dbReference type="FunCoup" id="Q9VUK8">
    <property type="interactions" value="2280"/>
</dbReference>
<dbReference type="IntAct" id="Q9VUK8">
    <property type="interactions" value="61"/>
</dbReference>
<dbReference type="STRING" id="7227.FBpp0075386"/>
<dbReference type="GlyGen" id="Q9VUK8">
    <property type="glycosylation" value="2 sites"/>
</dbReference>
<dbReference type="PaxDb" id="7227-FBpp0075386"/>
<dbReference type="DNASU" id="39644"/>
<dbReference type="EnsemblMetazoa" id="FBtr0075632">
    <molecule id="Q9VUK8-2"/>
    <property type="protein sequence ID" value="FBpp0075385"/>
    <property type="gene ID" value="FBgn0027088"/>
</dbReference>
<dbReference type="EnsemblMetazoa" id="FBtr0075633">
    <molecule id="Q9VUK8-1"/>
    <property type="protein sequence ID" value="FBpp0075386"/>
    <property type="gene ID" value="FBgn0027088"/>
</dbReference>
<dbReference type="EnsemblMetazoa" id="FBtr0333934">
    <molecule id="Q9VUK8-1"/>
    <property type="protein sequence ID" value="FBpp0306062"/>
    <property type="gene ID" value="FBgn0027088"/>
</dbReference>
<dbReference type="GeneID" id="39644"/>
<dbReference type="KEGG" id="dme:Dmel_CG6778"/>
<dbReference type="UCSC" id="CG6778-RA">
    <property type="organism name" value="d. melanogaster"/>
</dbReference>
<dbReference type="UCSC" id="CG6778-RB">
    <molecule id="Q9VUK8-1"/>
    <property type="organism name" value="d. melanogaster"/>
</dbReference>
<dbReference type="AGR" id="FB:FBgn0027088"/>
<dbReference type="CTD" id="39644"/>
<dbReference type="FlyBase" id="FBgn0027088">
    <property type="gene designation" value="GlyRS"/>
</dbReference>
<dbReference type="VEuPathDB" id="VectorBase:FBgn0027088"/>
<dbReference type="eggNOG" id="KOG2298">
    <property type="taxonomic scope" value="Eukaryota"/>
</dbReference>
<dbReference type="GeneTree" id="ENSGT00940000153759"/>
<dbReference type="HOGENOM" id="CLU_015515_1_0_1"/>
<dbReference type="InParanoid" id="Q9VUK8"/>
<dbReference type="OMA" id="MEMQYFV"/>
<dbReference type="OrthoDB" id="57698at2759"/>
<dbReference type="PhylomeDB" id="Q9VUK8"/>
<dbReference type="SignaLink" id="Q9VUK8"/>
<dbReference type="BioGRID-ORCS" id="39644">
    <property type="hits" value="0 hits in 3 CRISPR screens"/>
</dbReference>
<dbReference type="GenomeRNAi" id="39644"/>
<dbReference type="PRO" id="PR:Q9VUK8"/>
<dbReference type="Proteomes" id="UP000000803">
    <property type="component" value="Chromosome 3L"/>
</dbReference>
<dbReference type="Bgee" id="FBgn0027088">
    <property type="expression patterns" value="Expressed in oviduct (Drosophila) and 123 other cell types or tissues"/>
</dbReference>
<dbReference type="ExpressionAtlas" id="Q9VUK8">
    <property type="expression patterns" value="baseline and differential"/>
</dbReference>
<dbReference type="GO" id="GO:0030424">
    <property type="term" value="C:axon"/>
    <property type="evidence" value="ECO:0007669"/>
    <property type="project" value="UniProtKB-SubCell"/>
</dbReference>
<dbReference type="GO" id="GO:0005737">
    <property type="term" value="C:cytoplasm"/>
    <property type="evidence" value="ECO:0000314"/>
    <property type="project" value="FlyBase"/>
</dbReference>
<dbReference type="GO" id="GO:0005739">
    <property type="term" value="C:mitochondrion"/>
    <property type="evidence" value="ECO:0000314"/>
    <property type="project" value="FlyBase"/>
</dbReference>
<dbReference type="GO" id="GO:0005524">
    <property type="term" value="F:ATP binding"/>
    <property type="evidence" value="ECO:0007669"/>
    <property type="project" value="UniProtKB-KW"/>
</dbReference>
<dbReference type="GO" id="GO:0004820">
    <property type="term" value="F:glycine-tRNA ligase activity"/>
    <property type="evidence" value="ECO:0000318"/>
    <property type="project" value="GO_Central"/>
</dbReference>
<dbReference type="GO" id="GO:0016740">
    <property type="term" value="F:transferase activity"/>
    <property type="evidence" value="ECO:0007669"/>
    <property type="project" value="UniProtKB-KW"/>
</dbReference>
<dbReference type="GO" id="GO:0048813">
    <property type="term" value="P:dendrite morphogenesis"/>
    <property type="evidence" value="ECO:0000315"/>
    <property type="project" value="FlyBase"/>
</dbReference>
<dbReference type="GO" id="GO:0006426">
    <property type="term" value="P:glycyl-tRNA aminoacylation"/>
    <property type="evidence" value="ECO:0000304"/>
    <property type="project" value="FlyBase"/>
</dbReference>
<dbReference type="GO" id="GO:0035167">
    <property type="term" value="P:larval lymph gland hemopoiesis"/>
    <property type="evidence" value="ECO:0000315"/>
    <property type="project" value="FlyBase"/>
</dbReference>
<dbReference type="GO" id="GO:0070150">
    <property type="term" value="P:mitochondrial glycyl-tRNA aminoacylation"/>
    <property type="evidence" value="ECO:0000318"/>
    <property type="project" value="GO_Central"/>
</dbReference>
<dbReference type="CDD" id="cd00774">
    <property type="entry name" value="GlyRS-like_core"/>
    <property type="match status" value="1"/>
</dbReference>
<dbReference type="CDD" id="cd00858">
    <property type="entry name" value="GlyRS_anticodon"/>
    <property type="match status" value="1"/>
</dbReference>
<dbReference type="CDD" id="cd00935">
    <property type="entry name" value="GlyRS_RNA"/>
    <property type="match status" value="1"/>
</dbReference>
<dbReference type="FunFam" id="3.30.40.230:FF:000001">
    <property type="entry name" value="Glycine--tRNA ligase"/>
    <property type="match status" value="1"/>
</dbReference>
<dbReference type="FunFam" id="3.30.720.200:FF:000001">
    <property type="entry name" value="Glycine--tRNA ligase 2"/>
    <property type="match status" value="1"/>
</dbReference>
<dbReference type="FunFam" id="3.40.50.800:FF:000004">
    <property type="entry name" value="Glycine--tRNA ligase 2"/>
    <property type="match status" value="1"/>
</dbReference>
<dbReference type="FunFam" id="1.10.287.10:FF:000007">
    <property type="entry name" value="Glycyl-tRNA synthetase"/>
    <property type="match status" value="1"/>
</dbReference>
<dbReference type="FunFam" id="3.30.930.10:FF:000158">
    <property type="entry name" value="Glycyl-tRNA synthetase"/>
    <property type="match status" value="1"/>
</dbReference>
<dbReference type="FunFam" id="3.30.930.10:FF:000010">
    <property type="entry name" value="Glycyl-tRNA synthetase 1"/>
    <property type="match status" value="1"/>
</dbReference>
<dbReference type="Gene3D" id="3.30.40.230">
    <property type="match status" value="1"/>
</dbReference>
<dbReference type="Gene3D" id="3.30.720.200">
    <property type="match status" value="1"/>
</dbReference>
<dbReference type="Gene3D" id="3.40.50.800">
    <property type="entry name" value="Anticodon-binding domain"/>
    <property type="match status" value="1"/>
</dbReference>
<dbReference type="Gene3D" id="3.30.930.10">
    <property type="entry name" value="Bira Bifunctional Protein, Domain 2"/>
    <property type="match status" value="1"/>
</dbReference>
<dbReference type="Gene3D" id="1.10.287.10">
    <property type="entry name" value="S15/NS1, RNA-binding"/>
    <property type="match status" value="1"/>
</dbReference>
<dbReference type="InterPro" id="IPR002314">
    <property type="entry name" value="aa-tRNA-synt_IIb"/>
</dbReference>
<dbReference type="InterPro" id="IPR006195">
    <property type="entry name" value="aa-tRNA-synth_II"/>
</dbReference>
<dbReference type="InterPro" id="IPR045864">
    <property type="entry name" value="aa-tRNA-synth_II/BPL/LPL"/>
</dbReference>
<dbReference type="InterPro" id="IPR004154">
    <property type="entry name" value="Anticodon-bd"/>
</dbReference>
<dbReference type="InterPro" id="IPR036621">
    <property type="entry name" value="Anticodon-bd_dom_sf"/>
</dbReference>
<dbReference type="InterPro" id="IPR027031">
    <property type="entry name" value="Gly-tRNA_synthase/POLG2"/>
</dbReference>
<dbReference type="InterPro" id="IPR033731">
    <property type="entry name" value="GlyRS-like_core"/>
</dbReference>
<dbReference type="InterPro" id="IPR002315">
    <property type="entry name" value="tRNA-synt_gly"/>
</dbReference>
<dbReference type="InterPro" id="IPR009068">
    <property type="entry name" value="uS15_NS1_RNA-bd_sf"/>
</dbReference>
<dbReference type="InterPro" id="IPR000738">
    <property type="entry name" value="WHEP-TRS_dom"/>
</dbReference>
<dbReference type="NCBIfam" id="TIGR00389">
    <property type="entry name" value="glyS_dimeric"/>
    <property type="match status" value="1"/>
</dbReference>
<dbReference type="NCBIfam" id="NF003211">
    <property type="entry name" value="PRK04173.1"/>
    <property type="match status" value="1"/>
</dbReference>
<dbReference type="PANTHER" id="PTHR10745:SF0">
    <property type="entry name" value="GLYCINE--TRNA LIGASE"/>
    <property type="match status" value="1"/>
</dbReference>
<dbReference type="PANTHER" id="PTHR10745">
    <property type="entry name" value="GLYCYL-TRNA SYNTHETASE/DNA POLYMERASE SUBUNIT GAMMA-2"/>
    <property type="match status" value="1"/>
</dbReference>
<dbReference type="Pfam" id="PF03129">
    <property type="entry name" value="HGTP_anticodon"/>
    <property type="match status" value="1"/>
</dbReference>
<dbReference type="Pfam" id="PF00587">
    <property type="entry name" value="tRNA-synt_2b"/>
    <property type="match status" value="1"/>
</dbReference>
<dbReference type="Pfam" id="PF00458">
    <property type="entry name" value="WHEP-TRS"/>
    <property type="match status" value="1"/>
</dbReference>
<dbReference type="PRINTS" id="PR01043">
    <property type="entry name" value="TRNASYNTHGLY"/>
</dbReference>
<dbReference type="SMART" id="SM00991">
    <property type="entry name" value="WHEP-TRS"/>
    <property type="match status" value="1"/>
</dbReference>
<dbReference type="SUPFAM" id="SSF52954">
    <property type="entry name" value="Class II aaRS ABD-related"/>
    <property type="match status" value="1"/>
</dbReference>
<dbReference type="SUPFAM" id="SSF55681">
    <property type="entry name" value="Class II aaRS and biotin synthetases"/>
    <property type="match status" value="1"/>
</dbReference>
<dbReference type="SUPFAM" id="SSF47060">
    <property type="entry name" value="S15/NS1 RNA-binding domain"/>
    <property type="match status" value="1"/>
</dbReference>
<dbReference type="PROSITE" id="PS50862">
    <property type="entry name" value="AA_TRNA_LIGASE_II"/>
    <property type="match status" value="1"/>
</dbReference>
<dbReference type="PROSITE" id="PS00762">
    <property type="entry name" value="WHEP_TRS_1"/>
    <property type="match status" value="1"/>
</dbReference>
<dbReference type="PROSITE" id="PS51185">
    <property type="entry name" value="WHEP_TRS_2"/>
    <property type="match status" value="1"/>
</dbReference>
<accession>Q9VUK8</accession>
<accession>C9QP25</accession>
<accession>Q961R8</accession>
<reference evidence="16" key="1">
    <citation type="journal article" date="2000" name="Science">
        <title>The genome sequence of Drosophila melanogaster.</title>
        <authorList>
            <person name="Adams M.D."/>
            <person name="Celniker S.E."/>
            <person name="Holt R.A."/>
            <person name="Evans C.A."/>
            <person name="Gocayne J.D."/>
            <person name="Amanatides P.G."/>
            <person name="Scherer S.E."/>
            <person name="Li P.W."/>
            <person name="Hoskins R.A."/>
            <person name="Galle R.F."/>
            <person name="George R.A."/>
            <person name="Lewis S.E."/>
            <person name="Richards S."/>
            <person name="Ashburner M."/>
            <person name="Henderson S.N."/>
            <person name="Sutton G.G."/>
            <person name="Wortman J.R."/>
            <person name="Yandell M.D."/>
            <person name="Zhang Q."/>
            <person name="Chen L.X."/>
            <person name="Brandon R.C."/>
            <person name="Rogers Y.-H.C."/>
            <person name="Blazej R.G."/>
            <person name="Champe M."/>
            <person name="Pfeiffer B.D."/>
            <person name="Wan K.H."/>
            <person name="Doyle C."/>
            <person name="Baxter E.G."/>
            <person name="Helt G."/>
            <person name="Nelson C.R."/>
            <person name="Miklos G.L.G."/>
            <person name="Abril J.F."/>
            <person name="Agbayani A."/>
            <person name="An H.-J."/>
            <person name="Andrews-Pfannkoch C."/>
            <person name="Baldwin D."/>
            <person name="Ballew R.M."/>
            <person name="Basu A."/>
            <person name="Baxendale J."/>
            <person name="Bayraktaroglu L."/>
            <person name="Beasley E.M."/>
            <person name="Beeson K.Y."/>
            <person name="Benos P.V."/>
            <person name="Berman B.P."/>
            <person name="Bhandari D."/>
            <person name="Bolshakov S."/>
            <person name="Borkova D."/>
            <person name="Botchan M.R."/>
            <person name="Bouck J."/>
            <person name="Brokstein P."/>
            <person name="Brottier P."/>
            <person name="Burtis K.C."/>
            <person name="Busam D.A."/>
            <person name="Butler H."/>
            <person name="Cadieu E."/>
            <person name="Center A."/>
            <person name="Chandra I."/>
            <person name="Cherry J.M."/>
            <person name="Cawley S."/>
            <person name="Dahlke C."/>
            <person name="Davenport L.B."/>
            <person name="Davies P."/>
            <person name="de Pablos B."/>
            <person name="Delcher A."/>
            <person name="Deng Z."/>
            <person name="Mays A.D."/>
            <person name="Dew I."/>
            <person name="Dietz S.M."/>
            <person name="Dodson K."/>
            <person name="Doup L.E."/>
            <person name="Downes M."/>
            <person name="Dugan-Rocha S."/>
            <person name="Dunkov B.C."/>
            <person name="Dunn P."/>
            <person name="Durbin K.J."/>
            <person name="Evangelista C.C."/>
            <person name="Ferraz C."/>
            <person name="Ferriera S."/>
            <person name="Fleischmann W."/>
            <person name="Fosler C."/>
            <person name="Gabrielian A.E."/>
            <person name="Garg N.S."/>
            <person name="Gelbart W.M."/>
            <person name="Glasser K."/>
            <person name="Glodek A."/>
            <person name="Gong F."/>
            <person name="Gorrell J.H."/>
            <person name="Gu Z."/>
            <person name="Guan P."/>
            <person name="Harris M."/>
            <person name="Harris N.L."/>
            <person name="Harvey D.A."/>
            <person name="Heiman T.J."/>
            <person name="Hernandez J.R."/>
            <person name="Houck J."/>
            <person name="Hostin D."/>
            <person name="Houston K.A."/>
            <person name="Howland T.J."/>
            <person name="Wei M.-H."/>
            <person name="Ibegwam C."/>
            <person name="Jalali M."/>
            <person name="Kalush F."/>
            <person name="Karpen G.H."/>
            <person name="Ke Z."/>
            <person name="Kennison J.A."/>
            <person name="Ketchum K.A."/>
            <person name="Kimmel B.E."/>
            <person name="Kodira C.D."/>
            <person name="Kraft C.L."/>
            <person name="Kravitz S."/>
            <person name="Kulp D."/>
            <person name="Lai Z."/>
            <person name="Lasko P."/>
            <person name="Lei Y."/>
            <person name="Levitsky A.A."/>
            <person name="Li J.H."/>
            <person name="Li Z."/>
            <person name="Liang Y."/>
            <person name="Lin X."/>
            <person name="Liu X."/>
            <person name="Mattei B."/>
            <person name="McIntosh T.C."/>
            <person name="McLeod M.P."/>
            <person name="McPherson D."/>
            <person name="Merkulov G."/>
            <person name="Milshina N.V."/>
            <person name="Mobarry C."/>
            <person name="Morris J."/>
            <person name="Moshrefi A."/>
            <person name="Mount S.M."/>
            <person name="Moy M."/>
            <person name="Murphy B."/>
            <person name="Murphy L."/>
            <person name="Muzny D.M."/>
            <person name="Nelson D.L."/>
            <person name="Nelson D.R."/>
            <person name="Nelson K.A."/>
            <person name="Nixon K."/>
            <person name="Nusskern D.R."/>
            <person name="Pacleb J.M."/>
            <person name="Palazzolo M."/>
            <person name="Pittman G.S."/>
            <person name="Pan S."/>
            <person name="Pollard J."/>
            <person name="Puri V."/>
            <person name="Reese M.G."/>
            <person name="Reinert K."/>
            <person name="Remington K."/>
            <person name="Saunders R.D.C."/>
            <person name="Scheeler F."/>
            <person name="Shen H."/>
            <person name="Shue B.C."/>
            <person name="Siden-Kiamos I."/>
            <person name="Simpson M."/>
            <person name="Skupski M.P."/>
            <person name="Smith T.J."/>
            <person name="Spier E."/>
            <person name="Spradling A.C."/>
            <person name="Stapleton M."/>
            <person name="Strong R."/>
            <person name="Sun E."/>
            <person name="Svirskas R."/>
            <person name="Tector C."/>
            <person name="Turner R."/>
            <person name="Venter E."/>
            <person name="Wang A.H."/>
            <person name="Wang X."/>
            <person name="Wang Z.-Y."/>
            <person name="Wassarman D.A."/>
            <person name="Weinstock G.M."/>
            <person name="Weissenbach J."/>
            <person name="Williams S.M."/>
            <person name="Woodage T."/>
            <person name="Worley K.C."/>
            <person name="Wu D."/>
            <person name="Yang S."/>
            <person name="Yao Q.A."/>
            <person name="Ye J."/>
            <person name="Yeh R.-F."/>
            <person name="Zaveri J.S."/>
            <person name="Zhan M."/>
            <person name="Zhang G."/>
            <person name="Zhao Q."/>
            <person name="Zheng L."/>
            <person name="Zheng X.H."/>
            <person name="Zhong F.N."/>
            <person name="Zhong W."/>
            <person name="Zhou X."/>
            <person name="Zhu S.C."/>
            <person name="Zhu X."/>
            <person name="Smith H.O."/>
            <person name="Gibbs R.A."/>
            <person name="Myers E.W."/>
            <person name="Rubin G.M."/>
            <person name="Venter J.C."/>
        </authorList>
    </citation>
    <scope>NUCLEOTIDE SEQUENCE [LARGE SCALE GENOMIC DNA]</scope>
    <source>
        <strain evidence="16">Berkeley</strain>
    </source>
</reference>
<reference evidence="16" key="2">
    <citation type="journal article" date="2002" name="Genome Biol.">
        <title>Annotation of the Drosophila melanogaster euchromatic genome: a systematic review.</title>
        <authorList>
            <person name="Misra S."/>
            <person name="Crosby M.A."/>
            <person name="Mungall C.J."/>
            <person name="Matthews B.B."/>
            <person name="Campbell K.S."/>
            <person name="Hradecky P."/>
            <person name="Huang Y."/>
            <person name="Kaminker J.S."/>
            <person name="Millburn G.H."/>
            <person name="Prochnik S.E."/>
            <person name="Smith C.D."/>
            <person name="Tupy J.L."/>
            <person name="Whitfield E.J."/>
            <person name="Bayraktaroglu L."/>
            <person name="Berman B.P."/>
            <person name="Bettencourt B.R."/>
            <person name="Celniker S.E."/>
            <person name="de Grey A.D.N.J."/>
            <person name="Drysdale R.A."/>
            <person name="Harris N.L."/>
            <person name="Richter J."/>
            <person name="Russo S."/>
            <person name="Schroeder A.J."/>
            <person name="Shu S.Q."/>
            <person name="Stapleton M."/>
            <person name="Yamada C."/>
            <person name="Ashburner M."/>
            <person name="Gelbart W.M."/>
            <person name="Rubin G.M."/>
            <person name="Lewis S.E."/>
        </authorList>
    </citation>
    <scope>GENOME REANNOTATION</scope>
    <source>
        <strain evidence="16">Berkeley</strain>
    </source>
</reference>
<reference evidence="11" key="3">
    <citation type="journal article" date="2002" name="Genome Biol.">
        <title>A Drosophila full-length cDNA resource.</title>
        <authorList>
            <person name="Stapleton M."/>
            <person name="Carlson J.W."/>
            <person name="Brokstein P."/>
            <person name="Yu C."/>
            <person name="Champe M."/>
            <person name="George R.A."/>
            <person name="Guarin H."/>
            <person name="Kronmiller B."/>
            <person name="Pacleb J.M."/>
            <person name="Park S."/>
            <person name="Wan K.H."/>
            <person name="Rubin G.M."/>
            <person name="Celniker S.E."/>
        </authorList>
    </citation>
    <scope>NUCLEOTIDE SEQUENCE [LARGE SCALE MRNA] (ISOFORM A)</scope>
    <source>
        <strain evidence="11">Berkeley</strain>
        <tissue evidence="11">Head</tissue>
    </source>
</reference>
<reference evidence="13 14" key="4">
    <citation type="submission" date="2009-10" db="EMBL/GenBank/DDBJ databases">
        <authorList>
            <person name="Carlson J."/>
            <person name="Booth B."/>
            <person name="Frise E."/>
            <person name="Park S."/>
            <person name="Wan K."/>
            <person name="Yu C."/>
            <person name="Celniker S."/>
        </authorList>
    </citation>
    <scope>NUCLEOTIDE SEQUENCE [LARGE SCALE MRNA] (ISOFORM B)</scope>
    <source>
        <strain evidence="13 14">Berkeley</strain>
    </source>
</reference>
<reference evidence="10" key="5">
    <citation type="journal article" date="2007" name="Nat. Neurosci.">
        <title>Cytoplasmic and mitochondrial protein translation in axonal and dendritic terminal arborization.</title>
        <authorList>
            <person name="Chihara T."/>
            <person name="Luginbuhl D."/>
            <person name="Luo L."/>
        </authorList>
    </citation>
    <scope>FUNCTION</scope>
    <scope>SUBCELLULAR LOCATION (ISOFORMS A AND B)</scope>
    <scope>MUTAGENESIS OF MET-87 AND PRO-98</scope>
</reference>
<reference evidence="10" key="6">
    <citation type="journal article" date="2014" name="Neurobiol. Dis.">
        <title>CMT-associated mutations in glycyl- and tyrosyl-tRNA synthetases exhibit similar pattern of toxicity and share common genetic modifiers in Drosophila.</title>
        <authorList>
            <person name="Ermanoska B."/>
            <person name="Motley W.W."/>
            <person name="Leitao-Goncalves R."/>
            <person name="Asselbergh B."/>
            <person name="Lee L.H."/>
            <person name="De Rijk P."/>
            <person name="Sleegers K."/>
            <person name="Ooms T."/>
            <person name="Godenschwege T.A."/>
            <person name="Timmerman V."/>
            <person name="Fischbeck K.H."/>
            <person name="Jordanova A."/>
        </authorList>
    </citation>
    <scope>SUBCELLULAR LOCATION (ISOFORM A)</scope>
    <scope>MUTAGENESIS OF PRO-320 AND GLY-326</scope>
</reference>
<reference evidence="10" key="7">
    <citation type="journal article" date="2015" name="Hum. Mol. Genet.">
        <title>Dominant, toxic gain-of-function mutations in gars lead to non-cell autonomous neuropathology.</title>
        <authorList>
            <person name="Grice S.J."/>
            <person name="Sleigh J.N."/>
            <person name="Motley W.W."/>
            <person name="Liu J.L."/>
            <person name="Burgess R.W."/>
            <person name="Talbot K."/>
            <person name="Cader M.Z."/>
        </authorList>
    </citation>
    <scope>SUBCELLULAR LOCATION (ISOFORM A)</scope>
    <scope>MUTAGENESIS OF 97-ALA--PHE-163; PRO-320 AND GLY-326</scope>
</reference>
<reference evidence="10" key="8">
    <citation type="journal article" date="2018" name="Front. Mol. Neurosci.">
        <title>Plexin-Semaphorin Signaling Modifies Neuromuscular Defects in a Drosophila Model of Peripheral Neuropathy.</title>
        <authorList>
            <person name="Grice S.J."/>
            <person name="Sleigh J.N."/>
            <person name="Zameel Cader M."/>
        </authorList>
    </citation>
    <scope>SUBCELLULAR LOCATION (ISOFORM A)</scope>
    <scope>MUTAGENESIS OF PRO-320</scope>
</reference>
<sequence>MSLQLLKALPHLRSATTAVRTQIARTTWSEHIATKVFFSTTTTKPTPSAPPPPPPTQPQQPAATTSWGTKKQNRKVKLRSAAAEFIMSNPEIEAQLAPLRERVQEQGNLVRDLKAKGAPEIDVKKAVAELKARKKLLEDKELALTPSVVSFDRAKMEDLLKRRFFYDQSFAIYGGITGQYDFGPMGCALKSNILALWRQYFALEEQMLEVDCSILTPEPVLKASGHVERFADLMVKDVKTGECFRLDHLIKQALEKLSKAKDATPALQAECEDIIIKLDGLNKQELAGVLAKYNIKSPLTGNDLTEPIEFNLMFATQIGPTGLVKGFLRPETAQGIFVNFKRLLEFNQGKLPFAVAQIGNSFRNEISPRSGLIRVREFTMAEIEHFCDPVLKDHPKFGNIKSEKLTLYSACNQMDGKSAAQVQIGEAVASKLVANETLGYYMARIQQFLLAIGIKPECLRFRQHMSNEMAHYACDCWDAEILTSYGWVECVGCADRSAYDLGQHTAATGVRLVAEKRLPAPKTVEVSEIVPNKQALGKTFKKEAKNITDALAKLSLEEITKVEEQLAGDGQYKLTTADGQSHDLGKDTISVKHSTKTVHVEEFIPSVVEPSFGIGRIMYSLLEHSFQCRDGDEQRCYFTLPPLVAPIKCSILPLSNNTDFQPYTQKLSSALTKAELSHKVDDSSGSIGRRYARTDEIAIPYGITVDFDTLKEPHTVTLRDRNTMKQVRVGLEEVVGVVKDLSTARTTWESVTEQYPLFEQQEASK</sequence>
<feature type="transit peptide" description="Mitochondrion" evidence="2">
    <location>
        <begin position="1"/>
        <end position="87"/>
    </location>
</feature>
<feature type="chain" id="PRO_0000452350" description="Glycine--tRNA ligase" evidence="10">
    <location>
        <begin position="88"/>
        <end position="765"/>
    </location>
</feature>
<feature type="domain" description="WHEP-TRS" evidence="3">
    <location>
        <begin position="95"/>
        <end position="151"/>
    </location>
</feature>
<feature type="region of interest" description="Disordered" evidence="4">
    <location>
        <begin position="41"/>
        <end position="73"/>
    </location>
</feature>
<feature type="compositionally biased region" description="Pro residues" evidence="4">
    <location>
        <begin position="47"/>
        <end position="58"/>
    </location>
</feature>
<feature type="binding site" evidence="1">
    <location>
        <position position="331"/>
    </location>
    <ligand>
        <name>glycine</name>
        <dbReference type="ChEBI" id="CHEBI:57305"/>
    </ligand>
</feature>
<feature type="binding site" evidence="1">
    <location>
        <begin position="363"/>
        <end position="365"/>
    </location>
    <ligand>
        <name>ATP</name>
        <dbReference type="ChEBI" id="CHEBI:30616"/>
    </ligand>
</feature>
<feature type="binding site" evidence="1">
    <location>
        <begin position="374"/>
        <end position="375"/>
    </location>
    <ligand>
        <name>ATP</name>
        <dbReference type="ChEBI" id="CHEBI:30616"/>
    </ligand>
</feature>
<feature type="binding site" evidence="1">
    <location>
        <position position="382"/>
    </location>
    <ligand>
        <name>glycine</name>
        <dbReference type="ChEBI" id="CHEBI:57305"/>
    </ligand>
</feature>
<feature type="binding site" evidence="1">
    <location>
        <begin position="489"/>
        <end position="490"/>
    </location>
    <ligand>
        <name>ATP</name>
        <dbReference type="ChEBI" id="CHEBI:30616"/>
    </ligand>
</feature>
<feature type="binding site" evidence="1">
    <location>
        <begin position="609"/>
        <end position="611"/>
    </location>
    <ligand>
        <name>glycine</name>
        <dbReference type="ChEBI" id="CHEBI:57305"/>
    </ligand>
</feature>
<feature type="binding site" evidence="1">
    <location>
        <position position="616"/>
    </location>
    <ligand>
        <name>ATP</name>
        <dbReference type="ChEBI" id="CHEBI:30616"/>
    </ligand>
</feature>
<feature type="splice variant" id="VSP_060972" description="In isoform A.">
    <location>
        <begin position="1"/>
        <end position="86"/>
    </location>
</feature>
<feature type="mutagenesis site" description="Results in increased localization to mitochondria." evidence="5">
    <original>M</original>
    <variation>T</variation>
    <location>
        <position position="87"/>
    </location>
</feature>
<feature type="mutagenesis site" description="Suppresses accumulation at the synapse, reduced fly viability and defective neuromuscular junction; when associated with K-320." evidence="7">
    <location>
        <begin position="97"/>
        <end position="163"/>
    </location>
</feature>
<feature type="mutagenesis site" description="Results in neuronal terminal arborization defects and loss of neuroblasts." evidence="5">
    <original>P</original>
    <variation>L</variation>
    <location>
        <position position="98"/>
    </location>
</feature>
<feature type="mutagenesis site" description="When overexpressed in the whole body, leads to motor deficits, progressive neuromuscular junction (NMJ) denervation and pre-synaptic build-up of mutant GlyRS ultimately causing lethality. Similar effects are shown when overexpressed in the mesoderm or neurons. Accumulates at the synapse. When overexpressed in neurons, impairs progressively neuronal functionality and morphology. Toxicity might be mediated by modulation of the plexin-semaphorin signaling. Suppresses accumulation at the synapse, reduced fly viability and defective neuromuscular junction; when associated with 97-A--F-163 DEL." evidence="6 7 8">
    <original>P</original>
    <variation>K</variation>
    <location>
        <position position="320"/>
    </location>
</feature>
<feature type="mutagenesis site" description="When overexpressed in the whole body or mesoderm, impairs development and reduces longevity. When overexpressed in neurons, impairs progressively neuronal functionality and morphology." evidence="6 7">
    <original>G</original>
    <variation>R</variation>
    <location>
        <position position="326"/>
    </location>
</feature>
<feature type="sequence conflict" description="In Ref. 4; ACX32978." evidence="10" ref="4">
    <original>A</original>
    <variation>G</variation>
    <location>
        <position position="550"/>
    </location>
</feature>
<gene>
    <name evidence="15" type="primary">GlyRS</name>
    <name evidence="15" type="synonym">aaRS(Gly)</name>
    <name evidence="15" type="synonym">Aat-gly</name>
    <name evidence="9 15" type="synonym">Aats-gly</name>
    <name evidence="9 12" type="synonym">gars</name>
    <name evidence="15" type="synonym">GRS</name>
    <name evidence="9 15" type="synonym">team</name>
    <name evidence="15" type="ORF">CG6778</name>
</gene>
<comment type="function">
    <text evidence="1 5">Catalyzes the ATP-dependent ligation of glycine to the 3'-end of its cognate tRNA, via the formation of an aminoacyl-adenylate intermediate (Gly-AMP). Also produces diadenosine tetraphosphate (Ap4A), a universal pleiotropic signaling molecule needed for cell regulation pathways, by direct condensation of 2 ATPs. Thereby, may play a special role in Ap4A homeostasis (By similarity). Required for terminal arborization of both dendrites and axons during development (PubMed:17529987).</text>
</comment>
<comment type="catalytic activity">
    <reaction evidence="1">
        <text>2 ATP + H(+) = P(1),P(4)-bis(5'-adenosyl) tetraphosphate + diphosphate</text>
        <dbReference type="Rhea" id="RHEA:34935"/>
        <dbReference type="ChEBI" id="CHEBI:15378"/>
        <dbReference type="ChEBI" id="CHEBI:30616"/>
        <dbReference type="ChEBI" id="CHEBI:33019"/>
        <dbReference type="ChEBI" id="CHEBI:58141"/>
    </reaction>
    <physiologicalReaction direction="left-to-right" evidence="1">
        <dbReference type="Rhea" id="RHEA:34936"/>
    </physiologicalReaction>
</comment>
<comment type="catalytic activity">
    <reaction evidence="1">
        <text>tRNA(Gly) + glycine + ATP = glycyl-tRNA(Gly) + AMP + diphosphate</text>
        <dbReference type="Rhea" id="RHEA:16013"/>
        <dbReference type="Rhea" id="RHEA-COMP:9664"/>
        <dbReference type="Rhea" id="RHEA-COMP:9683"/>
        <dbReference type="ChEBI" id="CHEBI:30616"/>
        <dbReference type="ChEBI" id="CHEBI:33019"/>
        <dbReference type="ChEBI" id="CHEBI:57305"/>
        <dbReference type="ChEBI" id="CHEBI:78442"/>
        <dbReference type="ChEBI" id="CHEBI:78522"/>
        <dbReference type="ChEBI" id="CHEBI:456215"/>
        <dbReference type="EC" id="6.1.1.14"/>
    </reaction>
    <physiologicalReaction direction="left-to-right" evidence="1">
        <dbReference type="Rhea" id="RHEA:16014"/>
    </physiologicalReaction>
</comment>
<comment type="subunit">
    <text evidence="1">Homodimer.</text>
</comment>
<comment type="subcellular location">
    <molecule>Isoform B</molecule>
    <subcellularLocation>
        <location evidence="5">Mitochondrion</location>
    </subcellularLocation>
</comment>
<comment type="subcellular location">
    <molecule>Isoform A</molecule>
    <subcellularLocation>
        <location evidence="5 6 7">Cytoplasm</location>
    </subcellularLocation>
    <subcellularLocation>
        <location evidence="6 7">Cell projection</location>
        <location evidence="6 7">Axon</location>
    </subcellularLocation>
</comment>
<comment type="alternative products">
    <event type="alternative initiation"/>
    <isoform>
        <id>Q9VUK8-1</id>
        <name evidence="15">B</name>
        <sequence type="displayed"/>
    </isoform>
    <isoform>
        <id>Q9VUK8-2</id>
        <name evidence="15">A</name>
        <sequence type="described" ref="VSP_060972"/>
    </isoform>
</comment>
<comment type="similarity">
    <text evidence="1">Belongs to the class-II aminoacyl-tRNA synthetase family.</text>
</comment>
<evidence type="ECO:0000250" key="1">
    <source>
        <dbReference type="UniProtKB" id="P41250"/>
    </source>
</evidence>
<evidence type="ECO:0000255" key="2"/>
<evidence type="ECO:0000255" key="3">
    <source>
        <dbReference type="PROSITE-ProRule" id="PRU00531"/>
    </source>
</evidence>
<evidence type="ECO:0000256" key="4">
    <source>
        <dbReference type="SAM" id="MobiDB-lite"/>
    </source>
</evidence>
<evidence type="ECO:0000269" key="5">
    <source>
    </source>
</evidence>
<evidence type="ECO:0000269" key="6">
    <source>
    </source>
</evidence>
<evidence type="ECO:0000269" key="7">
    <source>
    </source>
</evidence>
<evidence type="ECO:0000269" key="8">
    <source>
    </source>
</evidence>
<evidence type="ECO:0000303" key="9">
    <source>
    </source>
</evidence>
<evidence type="ECO:0000305" key="10"/>
<evidence type="ECO:0000312" key="11">
    <source>
        <dbReference type="EMBL" id="AAK92837.1"/>
    </source>
</evidence>
<evidence type="ECO:0000312" key="12">
    <source>
        <dbReference type="EMBL" id="AAN11786.1"/>
    </source>
</evidence>
<evidence type="ECO:0000312" key="13">
    <source>
        <dbReference type="EMBL" id="ACX32978.1"/>
    </source>
</evidence>
<evidence type="ECO:0000312" key="14">
    <source>
        <dbReference type="EMBL" id="AFA28448.1"/>
    </source>
</evidence>
<evidence type="ECO:0000312" key="15">
    <source>
        <dbReference type="FlyBase" id="FBgn0027088"/>
    </source>
</evidence>
<evidence type="ECO:0000312" key="16">
    <source>
        <dbReference type="Proteomes" id="UP000000803"/>
    </source>
</evidence>
<keyword id="KW-0024">Alternative initiation</keyword>
<keyword id="KW-0030">Aminoacyl-tRNA synthetase</keyword>
<keyword id="KW-0067">ATP-binding</keyword>
<keyword id="KW-0966">Cell projection</keyword>
<keyword id="KW-0963">Cytoplasm</keyword>
<keyword id="KW-0436">Ligase</keyword>
<keyword id="KW-0496">Mitochondrion</keyword>
<keyword id="KW-0547">Nucleotide-binding</keyword>
<keyword id="KW-0648">Protein biosynthesis</keyword>
<keyword id="KW-1185">Reference proteome</keyword>
<keyword id="KW-0808">Transferase</keyword>
<keyword id="KW-0809">Transit peptide</keyword>
<protein>
    <recommendedName>
        <fullName evidence="10">Glycine--tRNA ligase</fullName>
        <ecNumber evidence="1">6.1.1.14</ecNumber>
    </recommendedName>
    <alternativeName>
        <fullName evidence="10">Diadenosine tetraphosphate synthetase</fullName>
        <ecNumber evidence="1">2.7.7.-</ecNumber>
    </alternativeName>
    <alternativeName>
        <fullName evidence="15">Glycyl-tRNA synthetase</fullName>
    </alternativeName>
</protein>
<proteinExistence type="evidence at protein level"/>
<name>GARS_DROME</name>